<gene>
    <name evidence="1" type="primary">uvrA</name>
    <name type="ordered locus">BSU35160</name>
</gene>
<comment type="function">
    <text evidence="1">The UvrABC repair system catalyzes the recognition and processing of DNA lesions. UvrA is an ATPase and a DNA-binding protein. A damage recognition complex composed of 2 UvrA and 2 UvrB subunits scans DNA for abnormalities. When the presence of a lesion has been verified by UvrB, the UvrA molecules dissociate.</text>
</comment>
<comment type="subunit">
    <text evidence="1">Forms a heterotetramer with UvrB during the search for lesions.</text>
</comment>
<comment type="subcellular location">
    <subcellularLocation>
        <location evidence="1">Cytoplasm</location>
    </subcellularLocation>
</comment>
<comment type="similarity">
    <text evidence="1">Belongs to the ABC transporter superfamily. UvrA family.</text>
</comment>
<evidence type="ECO:0000255" key="1">
    <source>
        <dbReference type="HAMAP-Rule" id="MF_00205"/>
    </source>
</evidence>
<name>UVRA_BACSU</name>
<accession>O34863</accession>
<sequence>MAMDRIEVKGARAHNLKNIDVTIPRDQLVVVTGLSGSGKSSLAFDTIYAEGQRRYVESLSAYARQFLGQMDKPDVDAIEGLSPAISIDQKTTSRNPRSTVGTVTEIYDYLRLLYARVGKPHCPEHGIEITSQTIEQMVDRILEYPERTKLQVLAPIVSGRKGAHVKVLEQIRKQGYVRVRIDGEMAELSDDIELEKNKKHSIEVVIDRIVVKEGVAARLSDSLETALRLGEGRVMIDVIGEEELMFSEHHACPHCGFSIGELEPRLFSFNSPFGACPTCDGLGMKLEVDADLVIPNQDLSLKENAVAPWTPISSQYYPQLLEAVCTHYGIDMDVPVKDLPKHQLDKVLYGSGDDLIYFRYENDFGQIREGEIQFEGVLRNIERRYKETGSDFIREQMEQYMSQKSCPTCKGYRLKKEALAVLIDGRHIGKITELSVADALAFFKDLTLSEKDMQIANLILREIVERLSFLDKVGLDYLTLSRAAGTLSGGEAQRIRLATQIGSRLSGVLYILDEPSIGLHQRDNDRLISALKNMRDLGNTLIVVEHDEDTMMAADYLIDIGPGAGIHGGQVISAGTPEEVMEDPNSLTGSYLSGKKFIPLPPERRKPDGRYIEIKGASENNLKKVNAKFPLGTFTAVTGVSGSGKSTLVNEILHKALAQKLHKAKAKPGSHKEIKGLDHLDKVIDIDQAPIGRTPRSNPATYTGVFDDIRDVFAQTNEAKVRGYKKGRFSFNVKGGRCEACRGDGIIKIEMHFLPDVYVPCEVCHGKRYNRETLEVTYKGKSISDVLDMTVEDALSFFENIPKIKRKLQTLYDVGLGYITLGQPATTLSGGEAQRVKLASELHKRSTGRTLYILDEPTTGLHVDDIARLLVVLQRLVDNGDTVLVIEHNLDIIKTADYIVDLGPEGGAGGGTIVASGTPEEITEVEESYTGRYLKPVIERDKTRMKSLLKAKETATS</sequence>
<reference key="1">
    <citation type="submission" date="1997-11" db="EMBL/GenBank/DDBJ databases">
        <title>Nucleotide sequence of the 300-304 chromosomal segment of Bacillus subtilis.</title>
        <authorList>
            <person name="Lazarevic V."/>
            <person name="Soldo B."/>
            <person name="Rivolta C."/>
            <person name="Reynolds S."/>
            <person name="Mauel C."/>
            <person name="Karamata D."/>
        </authorList>
    </citation>
    <scope>NUCLEOTIDE SEQUENCE [GENOMIC DNA]</scope>
</reference>
<reference key="2">
    <citation type="journal article" date="1997" name="Nature">
        <title>The complete genome sequence of the Gram-positive bacterium Bacillus subtilis.</title>
        <authorList>
            <person name="Kunst F."/>
            <person name="Ogasawara N."/>
            <person name="Moszer I."/>
            <person name="Albertini A.M."/>
            <person name="Alloni G."/>
            <person name="Azevedo V."/>
            <person name="Bertero M.G."/>
            <person name="Bessieres P."/>
            <person name="Bolotin A."/>
            <person name="Borchert S."/>
            <person name="Borriss R."/>
            <person name="Boursier L."/>
            <person name="Brans A."/>
            <person name="Braun M."/>
            <person name="Brignell S.C."/>
            <person name="Bron S."/>
            <person name="Brouillet S."/>
            <person name="Bruschi C.V."/>
            <person name="Caldwell B."/>
            <person name="Capuano V."/>
            <person name="Carter N.M."/>
            <person name="Choi S.-K."/>
            <person name="Codani J.-J."/>
            <person name="Connerton I.F."/>
            <person name="Cummings N.J."/>
            <person name="Daniel R.A."/>
            <person name="Denizot F."/>
            <person name="Devine K.M."/>
            <person name="Duesterhoeft A."/>
            <person name="Ehrlich S.D."/>
            <person name="Emmerson P.T."/>
            <person name="Entian K.-D."/>
            <person name="Errington J."/>
            <person name="Fabret C."/>
            <person name="Ferrari E."/>
            <person name="Foulger D."/>
            <person name="Fritz C."/>
            <person name="Fujita M."/>
            <person name="Fujita Y."/>
            <person name="Fuma S."/>
            <person name="Galizzi A."/>
            <person name="Galleron N."/>
            <person name="Ghim S.-Y."/>
            <person name="Glaser P."/>
            <person name="Goffeau A."/>
            <person name="Golightly E.J."/>
            <person name="Grandi G."/>
            <person name="Guiseppi G."/>
            <person name="Guy B.J."/>
            <person name="Haga K."/>
            <person name="Haiech J."/>
            <person name="Harwood C.R."/>
            <person name="Henaut A."/>
            <person name="Hilbert H."/>
            <person name="Holsappel S."/>
            <person name="Hosono S."/>
            <person name="Hullo M.-F."/>
            <person name="Itaya M."/>
            <person name="Jones L.-M."/>
            <person name="Joris B."/>
            <person name="Karamata D."/>
            <person name="Kasahara Y."/>
            <person name="Klaerr-Blanchard M."/>
            <person name="Klein C."/>
            <person name="Kobayashi Y."/>
            <person name="Koetter P."/>
            <person name="Koningstein G."/>
            <person name="Krogh S."/>
            <person name="Kumano M."/>
            <person name="Kurita K."/>
            <person name="Lapidus A."/>
            <person name="Lardinois S."/>
            <person name="Lauber J."/>
            <person name="Lazarevic V."/>
            <person name="Lee S.-M."/>
            <person name="Levine A."/>
            <person name="Liu H."/>
            <person name="Masuda S."/>
            <person name="Mauel C."/>
            <person name="Medigue C."/>
            <person name="Medina N."/>
            <person name="Mellado R.P."/>
            <person name="Mizuno M."/>
            <person name="Moestl D."/>
            <person name="Nakai S."/>
            <person name="Noback M."/>
            <person name="Noone D."/>
            <person name="O'Reilly M."/>
            <person name="Ogawa K."/>
            <person name="Ogiwara A."/>
            <person name="Oudega B."/>
            <person name="Park S.-H."/>
            <person name="Parro V."/>
            <person name="Pohl T.M."/>
            <person name="Portetelle D."/>
            <person name="Porwollik S."/>
            <person name="Prescott A.M."/>
            <person name="Presecan E."/>
            <person name="Pujic P."/>
            <person name="Purnelle B."/>
            <person name="Rapoport G."/>
            <person name="Rey M."/>
            <person name="Reynolds S."/>
            <person name="Rieger M."/>
            <person name="Rivolta C."/>
            <person name="Rocha E."/>
            <person name="Roche B."/>
            <person name="Rose M."/>
            <person name="Sadaie Y."/>
            <person name="Sato T."/>
            <person name="Scanlan E."/>
            <person name="Schleich S."/>
            <person name="Schroeter R."/>
            <person name="Scoffone F."/>
            <person name="Sekiguchi J."/>
            <person name="Sekowska A."/>
            <person name="Seror S.J."/>
            <person name="Serror P."/>
            <person name="Shin B.-S."/>
            <person name="Soldo B."/>
            <person name="Sorokin A."/>
            <person name="Tacconi E."/>
            <person name="Takagi T."/>
            <person name="Takahashi H."/>
            <person name="Takemaru K."/>
            <person name="Takeuchi M."/>
            <person name="Tamakoshi A."/>
            <person name="Tanaka T."/>
            <person name="Terpstra P."/>
            <person name="Tognoni A."/>
            <person name="Tosato V."/>
            <person name="Uchiyama S."/>
            <person name="Vandenbol M."/>
            <person name="Vannier F."/>
            <person name="Vassarotti A."/>
            <person name="Viari A."/>
            <person name="Wambutt R."/>
            <person name="Wedler E."/>
            <person name="Wedler H."/>
            <person name="Weitzenegger T."/>
            <person name="Winters P."/>
            <person name="Wipat A."/>
            <person name="Yamamoto H."/>
            <person name="Yamane K."/>
            <person name="Yasumoto K."/>
            <person name="Yata K."/>
            <person name="Yoshida K."/>
            <person name="Yoshikawa H.-F."/>
            <person name="Zumstein E."/>
            <person name="Yoshikawa H."/>
            <person name="Danchin A."/>
        </authorList>
    </citation>
    <scope>NUCLEOTIDE SEQUENCE [LARGE SCALE GENOMIC DNA]</scope>
    <source>
        <strain>168</strain>
    </source>
</reference>
<dbReference type="EMBL" id="AF017113">
    <property type="protein sequence ID" value="AAC67271.1"/>
    <property type="molecule type" value="Genomic_DNA"/>
</dbReference>
<dbReference type="EMBL" id="AL009126">
    <property type="protein sequence ID" value="CAB15533.1"/>
    <property type="molecule type" value="Genomic_DNA"/>
</dbReference>
<dbReference type="PIR" id="F69729">
    <property type="entry name" value="F69729"/>
</dbReference>
<dbReference type="RefSeq" id="NP_391396.1">
    <property type="nucleotide sequence ID" value="NC_000964.3"/>
</dbReference>
<dbReference type="RefSeq" id="WP_003228057.1">
    <property type="nucleotide sequence ID" value="NZ_OZ025638.1"/>
</dbReference>
<dbReference type="SMR" id="O34863"/>
<dbReference type="FunCoup" id="O34863">
    <property type="interactions" value="404"/>
</dbReference>
<dbReference type="IntAct" id="O34863">
    <property type="interactions" value="1"/>
</dbReference>
<dbReference type="MINT" id="O34863"/>
<dbReference type="STRING" id="224308.BSU35160"/>
<dbReference type="PaxDb" id="224308-BSU35160"/>
<dbReference type="EnsemblBacteria" id="CAB15533">
    <property type="protein sequence ID" value="CAB15533"/>
    <property type="gene ID" value="BSU_35160"/>
</dbReference>
<dbReference type="GeneID" id="936646"/>
<dbReference type="KEGG" id="bsu:BSU35160"/>
<dbReference type="PATRIC" id="fig|224308.179.peg.3806"/>
<dbReference type="eggNOG" id="COG0178">
    <property type="taxonomic scope" value="Bacteria"/>
</dbReference>
<dbReference type="InParanoid" id="O34863"/>
<dbReference type="OrthoDB" id="9809851at2"/>
<dbReference type="PhylomeDB" id="O34863"/>
<dbReference type="BioCyc" id="BSUB:BSU35160-MONOMER"/>
<dbReference type="Proteomes" id="UP000001570">
    <property type="component" value="Chromosome"/>
</dbReference>
<dbReference type="GO" id="GO:0005737">
    <property type="term" value="C:cytoplasm"/>
    <property type="evidence" value="ECO:0007669"/>
    <property type="project" value="UniProtKB-SubCell"/>
</dbReference>
<dbReference type="GO" id="GO:0009380">
    <property type="term" value="C:excinuclease repair complex"/>
    <property type="evidence" value="ECO:0007669"/>
    <property type="project" value="InterPro"/>
</dbReference>
<dbReference type="GO" id="GO:0005524">
    <property type="term" value="F:ATP binding"/>
    <property type="evidence" value="ECO:0007669"/>
    <property type="project" value="UniProtKB-UniRule"/>
</dbReference>
<dbReference type="GO" id="GO:0016887">
    <property type="term" value="F:ATP hydrolysis activity"/>
    <property type="evidence" value="ECO:0007669"/>
    <property type="project" value="InterPro"/>
</dbReference>
<dbReference type="GO" id="GO:0003677">
    <property type="term" value="F:DNA binding"/>
    <property type="evidence" value="ECO:0007669"/>
    <property type="project" value="UniProtKB-UniRule"/>
</dbReference>
<dbReference type="GO" id="GO:0009381">
    <property type="term" value="F:excinuclease ABC activity"/>
    <property type="evidence" value="ECO:0007669"/>
    <property type="project" value="UniProtKB-UniRule"/>
</dbReference>
<dbReference type="GO" id="GO:0008270">
    <property type="term" value="F:zinc ion binding"/>
    <property type="evidence" value="ECO:0007669"/>
    <property type="project" value="UniProtKB-UniRule"/>
</dbReference>
<dbReference type="GO" id="GO:0006289">
    <property type="term" value="P:nucleotide-excision repair"/>
    <property type="evidence" value="ECO:0007669"/>
    <property type="project" value="UniProtKB-UniRule"/>
</dbReference>
<dbReference type="GO" id="GO:0009432">
    <property type="term" value="P:SOS response"/>
    <property type="evidence" value="ECO:0007669"/>
    <property type="project" value="UniProtKB-UniRule"/>
</dbReference>
<dbReference type="CDD" id="cd03270">
    <property type="entry name" value="ABC_UvrA_I"/>
    <property type="match status" value="1"/>
</dbReference>
<dbReference type="CDD" id="cd03271">
    <property type="entry name" value="ABC_UvrA_II"/>
    <property type="match status" value="1"/>
</dbReference>
<dbReference type="FunFam" id="1.20.1580.10:FF:000002">
    <property type="entry name" value="UvrABC system protein A"/>
    <property type="match status" value="1"/>
</dbReference>
<dbReference type="FunFam" id="3.40.50.300:FF:000028">
    <property type="entry name" value="UvrABC system protein A"/>
    <property type="match status" value="1"/>
</dbReference>
<dbReference type="Gene3D" id="1.10.8.280">
    <property type="entry name" value="ABC transporter ATPase domain-like"/>
    <property type="match status" value="1"/>
</dbReference>
<dbReference type="Gene3D" id="1.20.1580.10">
    <property type="entry name" value="ABC transporter ATPase like domain"/>
    <property type="match status" value="2"/>
</dbReference>
<dbReference type="Gene3D" id="3.30.1490.20">
    <property type="entry name" value="ATP-grasp fold, A domain"/>
    <property type="match status" value="1"/>
</dbReference>
<dbReference type="Gene3D" id="3.40.50.300">
    <property type="entry name" value="P-loop containing nucleotide triphosphate hydrolases"/>
    <property type="match status" value="2"/>
</dbReference>
<dbReference type="HAMAP" id="MF_00205">
    <property type="entry name" value="UvrA"/>
    <property type="match status" value="1"/>
</dbReference>
<dbReference type="InterPro" id="IPR003593">
    <property type="entry name" value="AAA+_ATPase"/>
</dbReference>
<dbReference type="InterPro" id="IPR003439">
    <property type="entry name" value="ABC_transporter-like_ATP-bd"/>
</dbReference>
<dbReference type="InterPro" id="IPR017871">
    <property type="entry name" value="ABC_transporter-like_CS"/>
</dbReference>
<dbReference type="InterPro" id="IPR013815">
    <property type="entry name" value="ATP_grasp_subdomain_1"/>
</dbReference>
<dbReference type="InterPro" id="IPR027417">
    <property type="entry name" value="P-loop_NTPase"/>
</dbReference>
<dbReference type="InterPro" id="IPR004602">
    <property type="entry name" value="UvrA"/>
</dbReference>
<dbReference type="InterPro" id="IPR041552">
    <property type="entry name" value="UvrA_DNA-bd"/>
</dbReference>
<dbReference type="InterPro" id="IPR041102">
    <property type="entry name" value="UvrA_inter"/>
</dbReference>
<dbReference type="NCBIfam" id="NF001503">
    <property type="entry name" value="PRK00349.1"/>
    <property type="match status" value="1"/>
</dbReference>
<dbReference type="NCBIfam" id="TIGR00630">
    <property type="entry name" value="uvra"/>
    <property type="match status" value="1"/>
</dbReference>
<dbReference type="PANTHER" id="PTHR43152">
    <property type="entry name" value="UVRABC SYSTEM PROTEIN A"/>
    <property type="match status" value="1"/>
</dbReference>
<dbReference type="PANTHER" id="PTHR43152:SF3">
    <property type="entry name" value="UVRABC SYSTEM PROTEIN A"/>
    <property type="match status" value="1"/>
</dbReference>
<dbReference type="Pfam" id="PF17755">
    <property type="entry name" value="UvrA_DNA-bind"/>
    <property type="match status" value="1"/>
</dbReference>
<dbReference type="Pfam" id="PF17760">
    <property type="entry name" value="UvrA_inter"/>
    <property type="match status" value="1"/>
</dbReference>
<dbReference type="SMART" id="SM00382">
    <property type="entry name" value="AAA"/>
    <property type="match status" value="1"/>
</dbReference>
<dbReference type="SUPFAM" id="SSF52540">
    <property type="entry name" value="P-loop containing nucleoside triphosphate hydrolases"/>
    <property type="match status" value="2"/>
</dbReference>
<dbReference type="PROSITE" id="PS00211">
    <property type="entry name" value="ABC_TRANSPORTER_1"/>
    <property type="match status" value="2"/>
</dbReference>
<dbReference type="PROSITE" id="PS50893">
    <property type="entry name" value="ABC_TRANSPORTER_2"/>
    <property type="match status" value="2"/>
</dbReference>
<organism>
    <name type="scientific">Bacillus subtilis (strain 168)</name>
    <dbReference type="NCBI Taxonomy" id="224308"/>
    <lineage>
        <taxon>Bacteria</taxon>
        <taxon>Bacillati</taxon>
        <taxon>Bacillota</taxon>
        <taxon>Bacilli</taxon>
        <taxon>Bacillales</taxon>
        <taxon>Bacillaceae</taxon>
        <taxon>Bacillus</taxon>
    </lineage>
</organism>
<protein>
    <recommendedName>
        <fullName evidence="1">UvrABC system protein A</fullName>
        <shortName evidence="1">UvrA protein</shortName>
    </recommendedName>
    <alternativeName>
        <fullName evidence="1">Excinuclease ABC subunit A</fullName>
    </alternativeName>
</protein>
<feature type="chain" id="PRO_0000093035" description="UvrABC system protein A">
    <location>
        <begin position="1"/>
        <end position="957"/>
    </location>
</feature>
<feature type="domain" description="ABC transporter 1" evidence="1">
    <location>
        <begin position="309"/>
        <end position="587"/>
    </location>
</feature>
<feature type="domain" description="ABC transporter 2" evidence="1">
    <location>
        <begin position="607"/>
        <end position="935"/>
    </location>
</feature>
<feature type="zinc finger region" description="C4-type" evidence="1">
    <location>
        <begin position="252"/>
        <end position="279"/>
    </location>
</feature>
<feature type="zinc finger region" description="C4-type" evidence="1">
    <location>
        <begin position="738"/>
        <end position="764"/>
    </location>
</feature>
<feature type="binding site" evidence="1">
    <location>
        <begin position="33"/>
        <end position="40"/>
    </location>
    <ligand>
        <name>ATP</name>
        <dbReference type="ChEBI" id="CHEBI:30616"/>
    </ligand>
</feature>
<feature type="binding site" evidence="1">
    <location>
        <begin position="639"/>
        <end position="646"/>
    </location>
    <ligand>
        <name>ATP</name>
        <dbReference type="ChEBI" id="CHEBI:30616"/>
    </ligand>
</feature>
<keyword id="KW-0067">ATP-binding</keyword>
<keyword id="KW-0963">Cytoplasm</keyword>
<keyword id="KW-0227">DNA damage</keyword>
<keyword id="KW-0228">DNA excision</keyword>
<keyword id="KW-0234">DNA repair</keyword>
<keyword id="KW-0238">DNA-binding</keyword>
<keyword id="KW-0267">Excision nuclease</keyword>
<keyword id="KW-0479">Metal-binding</keyword>
<keyword id="KW-0547">Nucleotide-binding</keyword>
<keyword id="KW-1185">Reference proteome</keyword>
<keyword id="KW-0677">Repeat</keyword>
<keyword id="KW-0742">SOS response</keyword>
<keyword id="KW-0862">Zinc</keyword>
<keyword id="KW-0863">Zinc-finger</keyword>
<proteinExistence type="inferred from homology"/>